<accession>Q8DPI2</accession>
<organism>
    <name type="scientific">Streptococcus pneumoniae (strain ATCC BAA-255 / R6)</name>
    <dbReference type="NCBI Taxonomy" id="171101"/>
    <lineage>
        <taxon>Bacteria</taxon>
        <taxon>Bacillati</taxon>
        <taxon>Bacillota</taxon>
        <taxon>Bacilli</taxon>
        <taxon>Lactobacillales</taxon>
        <taxon>Streptococcaceae</taxon>
        <taxon>Streptococcus</taxon>
    </lineage>
</organism>
<keyword id="KW-0002">3D-structure</keyword>
<keyword id="KW-0961">Cell wall biogenesis/degradation</keyword>
<keyword id="KW-0548">Nucleotidyltransferase</keyword>
<keyword id="KW-1185">Reference proteome</keyword>
<keyword id="KW-0777">Teichoic acid biosynthesis</keyword>
<keyword id="KW-0808">Transferase</keyword>
<feature type="chain" id="PRO_0000075632" description="Ribitol-5-phosphate cytidylyltransferase">
    <location>
        <begin position="1"/>
        <end position="235"/>
    </location>
</feature>
<feature type="binding site" evidence="2 6">
    <location>
        <begin position="7"/>
        <end position="10"/>
    </location>
    <ligand>
        <name>CTP</name>
        <dbReference type="ChEBI" id="CHEBI:37563"/>
    </ligand>
</feature>
<feature type="binding site" evidence="2 6">
    <location>
        <begin position="82"/>
        <end position="88"/>
    </location>
    <ligand>
        <name>CTP</name>
        <dbReference type="ChEBI" id="CHEBI:37563"/>
    </ligand>
</feature>
<feature type="binding site" evidence="2 6">
    <location>
        <position position="113"/>
    </location>
    <ligand>
        <name>CTP</name>
        <dbReference type="ChEBI" id="CHEBI:37563"/>
    </ligand>
</feature>
<feature type="site" description="Transition state stabilizer" evidence="1 2">
    <location>
        <position position="14"/>
    </location>
</feature>
<feature type="site" description="Transition state stabilizer" evidence="1 2">
    <location>
        <position position="22"/>
    </location>
</feature>
<feature type="site" description="Positions ribitol 5-phosphate for the nucleophilic attack" evidence="1 2">
    <location>
        <position position="161"/>
    </location>
</feature>
<feature type="site" description="Positions ribitol 5-phosphate for the nucleophilic attack" evidence="1 2">
    <location>
        <position position="218"/>
    </location>
</feature>
<evidence type="ECO:0000250" key="1">
    <source>
        <dbReference type="UniProtKB" id="Q46893"/>
    </source>
</evidence>
<evidence type="ECO:0000255" key="2">
    <source>
        <dbReference type="HAMAP-Rule" id="MF_02068"/>
    </source>
</evidence>
<evidence type="ECO:0000269" key="3">
    <source>
    </source>
</evidence>
<evidence type="ECO:0000303" key="4">
    <source>
    </source>
</evidence>
<evidence type="ECO:0000305" key="5"/>
<evidence type="ECO:0000305" key="6">
    <source>
    </source>
</evidence>
<comment type="function">
    <text evidence="2 3">Catalyzes the transfer of the cytidylyl group of CTP to D-ribitol 5-phosphate.</text>
</comment>
<comment type="catalytic activity">
    <reaction evidence="2 3">
        <text>D-ribitol 5-phosphate + CTP + H(+) = CDP-L-ribitol + diphosphate</text>
        <dbReference type="Rhea" id="RHEA:12456"/>
        <dbReference type="ChEBI" id="CHEBI:15378"/>
        <dbReference type="ChEBI" id="CHEBI:33019"/>
        <dbReference type="ChEBI" id="CHEBI:37563"/>
        <dbReference type="ChEBI" id="CHEBI:57608"/>
        <dbReference type="ChEBI" id="CHEBI:57695"/>
        <dbReference type="EC" id="2.7.7.40"/>
    </reaction>
</comment>
<comment type="pathway">
    <text evidence="2 3">Cell wall biogenesis; poly(ribitol phosphate) teichoic acid biosynthesis.</text>
</comment>
<comment type="similarity">
    <text evidence="2 5">Belongs to the IspD/TarI cytidylyltransferase family. TarI subfamily.</text>
</comment>
<sequence length="235" mass="26242">MIYAGILAGGTGTRMGISNLPKQFLELGDRPILIHTIEKFVLEPSIEKIVVGVHGDWVSHAEDLVDKYLPLYKERIIITKGGADRNTSIKNIIEAIDAYRPLTPEDIVVTHDSVRPFITLRMIQDNIQLAQNHDAVDTVVEAVDTIVESTNGQFITDIPNRAHLYQGQTPQTFRCKDFMDLYGSLSDEEKEILTDACKIFVIKGKDVALAKGEYSNLKITTVTDLKIAKSMIEKD</sequence>
<dbReference type="EC" id="2.7.7.40" evidence="2 3"/>
<dbReference type="EMBL" id="AE007317">
    <property type="protein sequence ID" value="AAK99952.1"/>
    <property type="molecule type" value="Genomic_DNA"/>
</dbReference>
<dbReference type="PIR" id="D98015">
    <property type="entry name" value="D98015"/>
</dbReference>
<dbReference type="RefSeq" id="NP_358742.1">
    <property type="nucleotide sequence ID" value="NC_003098.1"/>
</dbReference>
<dbReference type="RefSeq" id="WP_000638508.1">
    <property type="nucleotide sequence ID" value="NC_003098.1"/>
</dbReference>
<dbReference type="PDB" id="2VSH">
    <property type="method" value="X-ray"/>
    <property type="resolution" value="2.00 A"/>
    <property type="chains" value="A/B=1-235"/>
</dbReference>
<dbReference type="PDB" id="2VSI">
    <property type="method" value="X-ray"/>
    <property type="resolution" value="2.75 A"/>
    <property type="chains" value="A/B=1-235"/>
</dbReference>
<dbReference type="PDBsum" id="2VSH"/>
<dbReference type="PDBsum" id="2VSI"/>
<dbReference type="SMR" id="Q8DPI2"/>
<dbReference type="STRING" id="171101.spr1149"/>
<dbReference type="KEGG" id="spr:spr1149"/>
<dbReference type="PATRIC" id="fig|171101.6.peg.1247"/>
<dbReference type="eggNOG" id="COG1211">
    <property type="taxonomic scope" value="Bacteria"/>
</dbReference>
<dbReference type="HOGENOM" id="CLU_061281_2_3_9"/>
<dbReference type="BioCyc" id="MetaCyc:MONOMER-20027"/>
<dbReference type="UniPathway" id="UPA00790"/>
<dbReference type="Proteomes" id="UP000000586">
    <property type="component" value="Chromosome"/>
</dbReference>
<dbReference type="GO" id="GO:0050518">
    <property type="term" value="F:2-C-methyl-D-erythritol 4-phosphate cytidylyltransferase activity"/>
    <property type="evidence" value="ECO:0000318"/>
    <property type="project" value="GO_Central"/>
</dbReference>
<dbReference type="GO" id="GO:0047349">
    <property type="term" value="F:D-ribitol-5-phosphate cytidylyltransferase activity"/>
    <property type="evidence" value="ECO:0007669"/>
    <property type="project" value="UniProtKB-UniRule"/>
</dbReference>
<dbReference type="GO" id="GO:0071555">
    <property type="term" value="P:cell wall organization"/>
    <property type="evidence" value="ECO:0007669"/>
    <property type="project" value="UniProtKB-KW"/>
</dbReference>
<dbReference type="GO" id="GO:0008299">
    <property type="term" value="P:isoprenoid biosynthetic process"/>
    <property type="evidence" value="ECO:0007669"/>
    <property type="project" value="InterPro"/>
</dbReference>
<dbReference type="GO" id="GO:1902012">
    <property type="term" value="P:poly(ribitol phosphate) teichoic acid biosynthetic process"/>
    <property type="evidence" value="ECO:0007669"/>
    <property type="project" value="UniProtKB-UniRule"/>
</dbReference>
<dbReference type="CDD" id="cd02516">
    <property type="entry name" value="CDP-ME_synthetase"/>
    <property type="match status" value="1"/>
</dbReference>
<dbReference type="FunFam" id="3.90.550.10:FF:000003">
    <property type="entry name" value="2-C-methyl-D-erythritol 4-phosphate cytidylyltransferase"/>
    <property type="match status" value="1"/>
</dbReference>
<dbReference type="Gene3D" id="3.90.550.10">
    <property type="entry name" value="Spore Coat Polysaccharide Biosynthesis Protein SpsA, Chain A"/>
    <property type="match status" value="1"/>
</dbReference>
<dbReference type="HAMAP" id="MF_02068">
    <property type="entry name" value="TarI"/>
    <property type="match status" value="1"/>
</dbReference>
<dbReference type="InterPro" id="IPR034683">
    <property type="entry name" value="IspD/TarI"/>
</dbReference>
<dbReference type="InterPro" id="IPR050088">
    <property type="entry name" value="IspD/TarI_cytidylyltransf_bact"/>
</dbReference>
<dbReference type="InterPro" id="IPR018294">
    <property type="entry name" value="ISPD_synthase_CS"/>
</dbReference>
<dbReference type="InterPro" id="IPR029044">
    <property type="entry name" value="Nucleotide-diphossugar_trans"/>
</dbReference>
<dbReference type="InterPro" id="IPR034709">
    <property type="entry name" value="TarI"/>
</dbReference>
<dbReference type="NCBIfam" id="NF001183">
    <property type="entry name" value="PRK00155.1-3"/>
    <property type="match status" value="1"/>
</dbReference>
<dbReference type="PANTHER" id="PTHR32125">
    <property type="entry name" value="2-C-METHYL-D-ERYTHRITOL 4-PHOSPHATE CYTIDYLYLTRANSFERASE, CHLOROPLASTIC"/>
    <property type="match status" value="1"/>
</dbReference>
<dbReference type="PANTHER" id="PTHR32125:SF8">
    <property type="entry name" value="RIBITOL-5-PHOSPHATE CYTIDYLYLTRANSFERASE"/>
    <property type="match status" value="1"/>
</dbReference>
<dbReference type="Pfam" id="PF01128">
    <property type="entry name" value="IspD"/>
    <property type="match status" value="1"/>
</dbReference>
<dbReference type="SUPFAM" id="SSF53448">
    <property type="entry name" value="Nucleotide-diphospho-sugar transferases"/>
    <property type="match status" value="1"/>
</dbReference>
<dbReference type="PROSITE" id="PS01295">
    <property type="entry name" value="ISPD"/>
    <property type="match status" value="1"/>
</dbReference>
<gene>
    <name evidence="2 4" type="primary">tarI</name>
    <name type="synonym">yacM</name>
    <name type="ordered locus">spr1149</name>
</gene>
<proteinExistence type="evidence at protein level"/>
<name>TARI_STRR6</name>
<reference key="1">
    <citation type="journal article" date="2001" name="J. Bacteriol.">
        <title>Genome of the bacterium Streptococcus pneumoniae strain R6.</title>
        <authorList>
            <person name="Hoskins J."/>
            <person name="Alborn W.E. Jr."/>
            <person name="Arnold J."/>
            <person name="Blaszczak L.C."/>
            <person name="Burgett S."/>
            <person name="DeHoff B.S."/>
            <person name="Estrem S.T."/>
            <person name="Fritz L."/>
            <person name="Fu D.-J."/>
            <person name="Fuller W."/>
            <person name="Geringer C."/>
            <person name="Gilmour R."/>
            <person name="Glass J.S."/>
            <person name="Khoja H."/>
            <person name="Kraft A.R."/>
            <person name="Lagace R.E."/>
            <person name="LeBlanc D.J."/>
            <person name="Lee L.N."/>
            <person name="Lefkowitz E.J."/>
            <person name="Lu J."/>
            <person name="Matsushima P."/>
            <person name="McAhren S.M."/>
            <person name="McHenney M."/>
            <person name="McLeaster K."/>
            <person name="Mundy C.W."/>
            <person name="Nicas T.I."/>
            <person name="Norris F.H."/>
            <person name="O'Gara M."/>
            <person name="Peery R.B."/>
            <person name="Robertson G.T."/>
            <person name="Rockey P."/>
            <person name="Sun P.-M."/>
            <person name="Winkler M.E."/>
            <person name="Yang Y."/>
            <person name="Young-Bellido M."/>
            <person name="Zhao G."/>
            <person name="Zook C.A."/>
            <person name="Baltz R.H."/>
            <person name="Jaskunas S.R."/>
            <person name="Rosteck P.R. Jr."/>
            <person name="Skatrud P.L."/>
            <person name="Glass J.I."/>
        </authorList>
    </citation>
    <scope>NUCLEOTIDE SEQUENCE [LARGE SCALE GENOMIC DNA]</scope>
    <source>
        <strain>ATCC BAA-255 / R6</strain>
    </source>
</reference>
<reference key="2">
    <citation type="journal article" date="2009" name="J. Bacteriol.">
        <title>Synthesis of CDP-activated ribitol for teichoic acid precursors in Streptococcus pneumoniae.</title>
        <authorList>
            <person name="Baur S."/>
            <person name="Marles-Wright J."/>
            <person name="Buckenmaier S."/>
            <person name="Lewis R.J."/>
            <person name="Vollmer W."/>
        </authorList>
    </citation>
    <scope>X-RAY CRYSTALLOGRAPHY (2.0 ANGSTROMS) OF APOENZYME AND IN COMPLEX WITH CDP</scope>
    <scope>FUNCTION</scope>
    <scope>CATALYTIC ACTIVITY</scope>
    <scope>PATHWAY</scope>
    <source>
        <strain>R36A</strain>
    </source>
</reference>
<protein>
    <recommendedName>
        <fullName evidence="2 4">Ribitol-5-phosphate cytidylyltransferase</fullName>
        <ecNumber evidence="2 3">2.7.7.40</ecNumber>
    </recommendedName>
</protein>